<feature type="chain" id="PRO_0000456565" description="Small ribosomal subunit protein eS28">
    <location>
        <begin position="1"/>
        <end position="67"/>
    </location>
</feature>
<evidence type="ECO:0000269" key="1">
    <source>
    </source>
</evidence>
<evidence type="ECO:0000303" key="2">
    <source>
    </source>
</evidence>
<evidence type="ECO:0000305" key="3"/>
<evidence type="ECO:0000305" key="4">
    <source>
    </source>
</evidence>
<evidence type="ECO:0007744" key="5">
    <source>
        <dbReference type="PDB" id="7PZY"/>
    </source>
</evidence>
<evidence type="ECO:0007744" key="6">
    <source>
        <dbReference type="PDB" id="7Q0F"/>
    </source>
</evidence>
<evidence type="ECO:0007744" key="7">
    <source>
        <dbReference type="PDB" id="7Q0P"/>
    </source>
</evidence>
<comment type="function">
    <text evidence="4">Component of the ribosome, a large ribonucleoprotein complex responsible for the synthesis of proteins in the cell. The small ribosomal subunit (SSU) binds messenger RNAs (mRNAs) and translates the encoded message by selecting cognate aminoacyl-transfer RNA (tRNA) molecules. The large subunit (LSU) contains the ribosomal catalytic site termed the peptidyl transferase center (PTC), which catalyzes the formation of peptide bonds, thereby polymerizing the amino acids delivered by tRNAs into a polypeptide chain. The nascent polypeptides leave the ribosome through a tunnel in the LSU and interact with protein factors that function in enzymatic processing, targeting, and the membrane insertion of nascent chains at the exit of the ribosomal tunnel.</text>
</comment>
<comment type="subunit">
    <text evidence="1">Component of the small ribosomal subunit (PubMed:35613268). Mature ribosomes consist of a small (40S) and a large (60S) subunit (PubMed:35613268). The 40S subunit contains about 32 different proteins and 1 molecule of RNA (18S) (PubMed:35613268). The 60S subunit contains 45 different proteins and 3 molecules of RNA (25S, 5.8S and 5S) (PubMed:35613268).</text>
</comment>
<comment type="subcellular location">
    <subcellularLocation>
        <location evidence="4">Cytoplasm</location>
    </subcellularLocation>
</comment>
<comment type="similarity">
    <text evidence="3">Belongs to the eukaryotic ribosomal protein eS28 family.</text>
</comment>
<reference key="1">
    <citation type="journal article" date="2004" name="Proc. Natl. Acad. Sci. U.S.A.">
        <title>The diploid genome sequence of Candida albicans.</title>
        <authorList>
            <person name="Jones T."/>
            <person name="Federspiel N.A."/>
            <person name="Chibana H."/>
            <person name="Dungan J."/>
            <person name="Kalman S."/>
            <person name="Magee B.B."/>
            <person name="Newport G."/>
            <person name="Thorstenson Y.R."/>
            <person name="Agabian N."/>
            <person name="Magee P.T."/>
            <person name="Davis R.W."/>
            <person name="Scherer S."/>
        </authorList>
    </citation>
    <scope>NUCLEOTIDE SEQUENCE [LARGE SCALE GENOMIC DNA]</scope>
    <source>
        <strain>SC5314 / ATCC MYA-2876</strain>
    </source>
</reference>
<reference key="2">
    <citation type="journal article" date="2007" name="Genome Biol.">
        <title>Assembly of the Candida albicans genome into sixteen supercontigs aligned on the eight chromosomes.</title>
        <authorList>
            <person name="van het Hoog M."/>
            <person name="Rast T.J."/>
            <person name="Martchenko M."/>
            <person name="Grindle S."/>
            <person name="Dignard D."/>
            <person name="Hogues H."/>
            <person name="Cuomo C."/>
            <person name="Berriman M."/>
            <person name="Scherer S."/>
            <person name="Magee B.B."/>
            <person name="Whiteway M."/>
            <person name="Chibana H."/>
            <person name="Nantel A."/>
            <person name="Magee P.T."/>
        </authorList>
    </citation>
    <scope>GENOME REANNOTATION</scope>
    <source>
        <strain>SC5314 / ATCC MYA-2876</strain>
    </source>
</reference>
<reference key="3">
    <citation type="journal article" date="2013" name="Genome Biol.">
        <title>Assembly of a phased diploid Candida albicans genome facilitates allele-specific measurements and provides a simple model for repeat and indel structure.</title>
        <authorList>
            <person name="Muzzey D."/>
            <person name="Schwartz K."/>
            <person name="Weissman J.S."/>
            <person name="Sherlock G."/>
        </authorList>
    </citation>
    <scope>NUCLEOTIDE SEQUENCE [LARGE SCALE GENOMIC DNA]</scope>
    <scope>GENOME REANNOTATION</scope>
    <source>
        <strain>SC5314 / ATCC MYA-2876</strain>
    </source>
</reference>
<reference evidence="5 6 7" key="4">
    <citation type="journal article" date="2022" name="Sci. Adv.">
        <title>E-site drug specificity of the human pathogen Candida albicans ribosome.</title>
        <authorList>
            <person name="Zgadzay Y."/>
            <person name="Kolosova O."/>
            <person name="Stetsenko A."/>
            <person name="Wu C."/>
            <person name="Bruchlen D."/>
            <person name="Usachev K."/>
            <person name="Validov S."/>
            <person name="Jenner L."/>
            <person name="Rogachev A."/>
            <person name="Yusupova G."/>
            <person name="Sachs M.S."/>
            <person name="Guskov A."/>
            <person name="Yusupov M."/>
        </authorList>
    </citation>
    <scope>STRUCTURE BY ELECTRON MICROSCOPY (2.32 ANGSTROMS) OF THE 80S RIBOSOME</scope>
    <scope>SUBUNIT</scope>
</reference>
<proteinExistence type="evidence at protein level"/>
<organism>
    <name type="scientific">Candida albicans (strain SC5314 / ATCC MYA-2876)</name>
    <name type="common">Yeast</name>
    <dbReference type="NCBI Taxonomy" id="237561"/>
    <lineage>
        <taxon>Eukaryota</taxon>
        <taxon>Fungi</taxon>
        <taxon>Dikarya</taxon>
        <taxon>Ascomycota</taxon>
        <taxon>Saccharomycotina</taxon>
        <taxon>Pichiomycetes</taxon>
        <taxon>Debaryomycetaceae</taxon>
        <taxon>Candida/Lodderomyces clade</taxon>
        <taxon>Candida</taxon>
    </lineage>
</organism>
<name>RS28B_CANAL</name>
<keyword id="KW-0002">3D-structure</keyword>
<keyword id="KW-0963">Cytoplasm</keyword>
<keyword id="KW-1185">Reference proteome</keyword>
<keyword id="KW-0687">Ribonucleoprotein</keyword>
<keyword id="KW-0689">Ribosomal protein</keyword>
<gene>
    <name type="primary">RPS28B</name>
    <name type="ordered locus">orf19.7048.1</name>
    <name type="ORF">CAALFM_C700710WA</name>
</gene>
<accession>A0A1D8PQN0</accession>
<protein>
    <recommendedName>
        <fullName evidence="2">Small ribosomal subunit protein eS28</fullName>
    </recommendedName>
    <alternativeName>
        <fullName>40S ribosomal protein S28B</fullName>
    </alternativeName>
</protein>
<sequence>MDAKTPVTLAKVIKVLGRTGSRGGVTQVRVEFLEDASRTIVRNVKGPVRENDILCLMESEREARRLR</sequence>
<dbReference type="EMBL" id="CP017629">
    <property type="protein sequence ID" value="AOW30447.1"/>
    <property type="molecule type" value="Genomic_DNA"/>
</dbReference>
<dbReference type="RefSeq" id="XP_019331021.1">
    <property type="nucleotide sequence ID" value="XM_019475476.1"/>
</dbReference>
<dbReference type="PDB" id="7PZY">
    <property type="method" value="EM"/>
    <property type="resolution" value="2.32 A"/>
    <property type="chains" value="d=1-67"/>
</dbReference>
<dbReference type="PDB" id="7Q08">
    <property type="method" value="EM"/>
    <property type="resolution" value="2.56 A"/>
    <property type="chains" value="d=1-67"/>
</dbReference>
<dbReference type="PDB" id="7Q0F">
    <property type="method" value="EM"/>
    <property type="resolution" value="2.64 A"/>
    <property type="chains" value="d=1-67"/>
</dbReference>
<dbReference type="PDB" id="7Q0P">
    <property type="method" value="EM"/>
    <property type="resolution" value="2.77 A"/>
    <property type="chains" value="d=1-67"/>
</dbReference>
<dbReference type="PDB" id="7Q0R">
    <property type="method" value="EM"/>
    <property type="resolution" value="2.67 A"/>
    <property type="chains" value="d=1-67"/>
</dbReference>
<dbReference type="PDB" id="8C3A">
    <property type="method" value="X-ray"/>
    <property type="resolution" value="3.00 A"/>
    <property type="chains" value="DP/e=1-67"/>
</dbReference>
<dbReference type="PDB" id="8OGJ">
    <property type="method" value="EM"/>
    <property type="resolution" value="3.10 A"/>
    <property type="chains" value="d=1-67"/>
</dbReference>
<dbReference type="PDB" id="8OH6">
    <property type="method" value="X-ray"/>
    <property type="resolution" value="3.35 A"/>
    <property type="chains" value="DP/e=1-67"/>
</dbReference>
<dbReference type="PDB" id="8OI5">
    <property type="method" value="X-ray"/>
    <property type="resolution" value="2.90 A"/>
    <property type="chains" value="DP/e=1-67"/>
</dbReference>
<dbReference type="PDB" id="8OJ3">
    <property type="method" value="X-ray"/>
    <property type="resolution" value="3.50 A"/>
    <property type="chains" value="DP/e=1-67"/>
</dbReference>
<dbReference type="PDBsum" id="7PZY"/>
<dbReference type="PDBsum" id="7Q08"/>
<dbReference type="PDBsum" id="7Q0F"/>
<dbReference type="PDBsum" id="7Q0P"/>
<dbReference type="PDBsum" id="7Q0R"/>
<dbReference type="PDBsum" id="8C3A"/>
<dbReference type="PDBsum" id="8OGJ"/>
<dbReference type="PDBsum" id="8OH6"/>
<dbReference type="PDBsum" id="8OI5"/>
<dbReference type="PDBsum" id="8OJ3"/>
<dbReference type="EMDB" id="EMD-13737"/>
<dbReference type="EMDB" id="EMD-13741"/>
<dbReference type="EMDB" id="EMD-13744"/>
<dbReference type="EMDB" id="EMD-13749"/>
<dbReference type="EMDB" id="EMD-13750"/>
<dbReference type="SMR" id="A0A1D8PQN0"/>
<dbReference type="FunCoup" id="A0A1D8PQN0">
    <property type="interactions" value="949"/>
</dbReference>
<dbReference type="STRING" id="237561.A0A1D8PQN0"/>
<dbReference type="EnsemblFungi" id="C7_00710W_A-T">
    <property type="protein sequence ID" value="C7_00710W_A-T-p1"/>
    <property type="gene ID" value="C7_00710W_A"/>
</dbReference>
<dbReference type="GeneID" id="30515349"/>
<dbReference type="KEGG" id="cal:CAALFM_C700710WA"/>
<dbReference type="CGD" id="CAL0000196464">
    <property type="gene designation" value="RPS28B"/>
</dbReference>
<dbReference type="VEuPathDB" id="FungiDB:C7_00710W_A"/>
<dbReference type="eggNOG" id="KOG3502">
    <property type="taxonomic scope" value="Eukaryota"/>
</dbReference>
<dbReference type="InParanoid" id="A0A1D8PQN0"/>
<dbReference type="OMA" id="NTGMHGE"/>
<dbReference type="OrthoDB" id="10258930at2759"/>
<dbReference type="Proteomes" id="UP000000559">
    <property type="component" value="Chromosome 7"/>
</dbReference>
<dbReference type="GO" id="GO:0022627">
    <property type="term" value="C:cytosolic small ribosomal subunit"/>
    <property type="evidence" value="ECO:0000318"/>
    <property type="project" value="GO_Central"/>
</dbReference>
<dbReference type="GO" id="GO:0003735">
    <property type="term" value="F:structural constituent of ribosome"/>
    <property type="evidence" value="ECO:0000318"/>
    <property type="project" value="GO_Central"/>
</dbReference>
<dbReference type="GO" id="GO:0030490">
    <property type="term" value="P:maturation of SSU-rRNA"/>
    <property type="evidence" value="ECO:0000318"/>
    <property type="project" value="GO_Central"/>
</dbReference>
<dbReference type="GO" id="GO:0000028">
    <property type="term" value="P:ribosomal small subunit assembly"/>
    <property type="evidence" value="ECO:0000318"/>
    <property type="project" value="GO_Central"/>
</dbReference>
<dbReference type="GO" id="GO:0006412">
    <property type="term" value="P:translation"/>
    <property type="evidence" value="ECO:0007669"/>
    <property type="project" value="InterPro"/>
</dbReference>
<dbReference type="CDD" id="cd04457">
    <property type="entry name" value="S1_S28E"/>
    <property type="match status" value="1"/>
</dbReference>
<dbReference type="FunFam" id="2.40.50.140:FF:000025">
    <property type="entry name" value="40S ribosomal protein S28"/>
    <property type="match status" value="1"/>
</dbReference>
<dbReference type="Gene3D" id="2.40.50.140">
    <property type="entry name" value="Nucleic acid-binding proteins"/>
    <property type="match status" value="1"/>
</dbReference>
<dbReference type="HAMAP" id="MF_00292">
    <property type="entry name" value="Ribosomal_eS28"/>
    <property type="match status" value="1"/>
</dbReference>
<dbReference type="InterPro" id="IPR012340">
    <property type="entry name" value="NA-bd_OB-fold"/>
</dbReference>
<dbReference type="InterPro" id="IPR000289">
    <property type="entry name" value="Ribosomal_eS28"/>
</dbReference>
<dbReference type="InterPro" id="IPR028626">
    <property type="entry name" value="Ribosomal_eS28_CS"/>
</dbReference>
<dbReference type="PANTHER" id="PTHR10769">
    <property type="entry name" value="40S RIBOSOMAL PROTEIN S28"/>
    <property type="match status" value="1"/>
</dbReference>
<dbReference type="PANTHER" id="PTHR10769:SF3">
    <property type="entry name" value="SMALL RIBOSOMAL SUBUNIT PROTEIN ES28"/>
    <property type="match status" value="1"/>
</dbReference>
<dbReference type="Pfam" id="PF01200">
    <property type="entry name" value="Ribosomal_S28e"/>
    <property type="match status" value="1"/>
</dbReference>
<dbReference type="SUPFAM" id="SSF50249">
    <property type="entry name" value="Nucleic acid-binding proteins"/>
    <property type="match status" value="1"/>
</dbReference>
<dbReference type="PROSITE" id="PS00961">
    <property type="entry name" value="RIBOSOMAL_S28E"/>
    <property type="match status" value="1"/>
</dbReference>